<reference key="1">
    <citation type="journal article" date="1970" name="Nature">
        <title>Haemoglobin alpha chain duplication in Barbary sheep, Ammotragus lervia, Pallas, 1777.</title>
        <authorList>
            <person name="Wilson J.B."/>
            <person name="Wrightstone R.N."/>
            <person name="Huisman T.H.J."/>
        </authorList>
    </citation>
    <scope>PROTEIN SEQUENCE OF 2-142</scope>
</reference>
<proteinExistence type="evidence at protein level"/>
<feature type="initiator methionine" description="Removed" evidence="5">
    <location>
        <position position="1"/>
    </location>
</feature>
<feature type="chain" id="PRO_0000052583" description="Hemoglobin subunit alpha-1/2">
    <location>
        <begin position="2"/>
        <end position="142"/>
    </location>
</feature>
<feature type="domain" description="Globin" evidence="4">
    <location>
        <begin position="2"/>
        <end position="142"/>
    </location>
</feature>
<feature type="binding site" evidence="4">
    <location>
        <position position="59"/>
    </location>
    <ligand>
        <name>O2</name>
        <dbReference type="ChEBI" id="CHEBI:15379"/>
    </ligand>
</feature>
<feature type="binding site" description="proximal binding residue" evidence="4">
    <location>
        <position position="88"/>
    </location>
    <ligand>
        <name>heme b</name>
        <dbReference type="ChEBI" id="CHEBI:60344"/>
    </ligand>
    <ligandPart>
        <name>Fe</name>
        <dbReference type="ChEBI" id="CHEBI:18248"/>
    </ligandPart>
</feature>
<feature type="modified residue" description="Phosphoserine" evidence="3">
    <location>
        <position position="4"/>
    </location>
</feature>
<feature type="modified residue" description="N6-succinyllysine" evidence="2">
    <location>
        <position position="8"/>
    </location>
</feature>
<feature type="modified residue" description="N6-succinyllysine" evidence="2">
    <location>
        <position position="12"/>
    </location>
</feature>
<feature type="modified residue" description="N6-acetyllysine; alternate" evidence="3">
    <location>
        <position position="17"/>
    </location>
</feature>
<feature type="modified residue" description="N6-succinyllysine; alternate" evidence="2">
    <location>
        <position position="17"/>
    </location>
</feature>
<feature type="modified residue" description="Phosphotyrosine" evidence="3">
    <location>
        <position position="25"/>
    </location>
</feature>
<feature type="modified residue" description="Phosphoserine" evidence="3">
    <location>
        <position position="36"/>
    </location>
</feature>
<feature type="modified residue" description="N6-succinyllysine" evidence="2">
    <location>
        <position position="41"/>
    </location>
</feature>
<feature type="modified residue" description="Phosphoserine" evidence="3">
    <location>
        <position position="50"/>
    </location>
</feature>
<feature type="modified residue" description="Phosphoserine" evidence="2">
    <location>
        <position position="103"/>
    </location>
</feature>
<feature type="modified residue" description="Phosphothreonine" evidence="2">
    <location>
        <position position="109"/>
    </location>
</feature>
<feature type="modified residue" description="Phosphoserine" evidence="2">
    <location>
        <position position="125"/>
    </location>
</feature>
<feature type="modified residue" description="Phosphothreonine" evidence="2">
    <location>
        <position position="135"/>
    </location>
</feature>
<feature type="modified residue" description="Phosphothreonine" evidence="2">
    <location>
        <position position="138"/>
    </location>
</feature>
<feature type="modified residue" description="Phosphoserine" evidence="2">
    <location>
        <position position="139"/>
    </location>
</feature>
<feature type="sequence variant" description="In alpha-2.">
    <original>G</original>
    <variation>S</variation>
    <location>
        <position position="20"/>
    </location>
</feature>
<feature type="sequence variant" description="In alpha-2.">
    <original>L</original>
    <variation>H</variation>
    <location>
        <position position="114"/>
    </location>
</feature>
<feature type="sequence variant" description="In alpha-2.">
    <original>N</original>
    <variation>S</variation>
    <location>
        <position position="116"/>
    </location>
</feature>
<name>HBA_AMMLE</name>
<accession>P68239</accession>
<accession>P01970</accession>
<dbReference type="PIR" id="A93162">
    <property type="entry name" value="HASHR1"/>
</dbReference>
<dbReference type="PIR" id="B93162">
    <property type="entry name" value="HASHR2"/>
</dbReference>
<dbReference type="SMR" id="P68239"/>
<dbReference type="GO" id="GO:0072562">
    <property type="term" value="C:blood microparticle"/>
    <property type="evidence" value="ECO:0007669"/>
    <property type="project" value="TreeGrafter"/>
</dbReference>
<dbReference type="GO" id="GO:0031838">
    <property type="term" value="C:haptoglobin-hemoglobin complex"/>
    <property type="evidence" value="ECO:0007669"/>
    <property type="project" value="TreeGrafter"/>
</dbReference>
<dbReference type="GO" id="GO:0005833">
    <property type="term" value="C:hemoglobin complex"/>
    <property type="evidence" value="ECO:0007669"/>
    <property type="project" value="InterPro"/>
</dbReference>
<dbReference type="GO" id="GO:0031720">
    <property type="term" value="F:haptoglobin binding"/>
    <property type="evidence" value="ECO:0007669"/>
    <property type="project" value="TreeGrafter"/>
</dbReference>
<dbReference type="GO" id="GO:0020037">
    <property type="term" value="F:heme binding"/>
    <property type="evidence" value="ECO:0007669"/>
    <property type="project" value="InterPro"/>
</dbReference>
<dbReference type="GO" id="GO:0005506">
    <property type="term" value="F:iron ion binding"/>
    <property type="evidence" value="ECO:0007669"/>
    <property type="project" value="InterPro"/>
</dbReference>
<dbReference type="GO" id="GO:0043177">
    <property type="term" value="F:organic acid binding"/>
    <property type="evidence" value="ECO:0007669"/>
    <property type="project" value="TreeGrafter"/>
</dbReference>
<dbReference type="GO" id="GO:0019825">
    <property type="term" value="F:oxygen binding"/>
    <property type="evidence" value="ECO:0007669"/>
    <property type="project" value="InterPro"/>
</dbReference>
<dbReference type="GO" id="GO:0005344">
    <property type="term" value="F:oxygen carrier activity"/>
    <property type="evidence" value="ECO:0007669"/>
    <property type="project" value="UniProtKB-KW"/>
</dbReference>
<dbReference type="GO" id="GO:0004601">
    <property type="term" value="F:peroxidase activity"/>
    <property type="evidence" value="ECO:0007669"/>
    <property type="project" value="TreeGrafter"/>
</dbReference>
<dbReference type="GO" id="GO:0042744">
    <property type="term" value="P:hydrogen peroxide catabolic process"/>
    <property type="evidence" value="ECO:0007669"/>
    <property type="project" value="TreeGrafter"/>
</dbReference>
<dbReference type="CDD" id="cd08927">
    <property type="entry name" value="Hb-alpha-like"/>
    <property type="match status" value="1"/>
</dbReference>
<dbReference type="FunFam" id="1.10.490.10:FF:000002">
    <property type="entry name" value="Hemoglobin subunit alpha"/>
    <property type="match status" value="1"/>
</dbReference>
<dbReference type="Gene3D" id="1.10.490.10">
    <property type="entry name" value="Globins"/>
    <property type="match status" value="1"/>
</dbReference>
<dbReference type="InterPro" id="IPR000971">
    <property type="entry name" value="Globin"/>
</dbReference>
<dbReference type="InterPro" id="IPR009050">
    <property type="entry name" value="Globin-like_sf"/>
</dbReference>
<dbReference type="InterPro" id="IPR012292">
    <property type="entry name" value="Globin/Proto"/>
</dbReference>
<dbReference type="InterPro" id="IPR002338">
    <property type="entry name" value="Hemoglobin_a-typ"/>
</dbReference>
<dbReference type="InterPro" id="IPR050056">
    <property type="entry name" value="Hemoglobin_oxygen_transport"/>
</dbReference>
<dbReference type="InterPro" id="IPR002339">
    <property type="entry name" value="Hemoglobin_pi"/>
</dbReference>
<dbReference type="PANTHER" id="PTHR11442">
    <property type="entry name" value="HEMOGLOBIN FAMILY MEMBER"/>
    <property type="match status" value="1"/>
</dbReference>
<dbReference type="PANTHER" id="PTHR11442:SF48">
    <property type="entry name" value="HEMOGLOBIN SUBUNIT ALPHA"/>
    <property type="match status" value="1"/>
</dbReference>
<dbReference type="Pfam" id="PF00042">
    <property type="entry name" value="Globin"/>
    <property type="match status" value="1"/>
</dbReference>
<dbReference type="PRINTS" id="PR00612">
    <property type="entry name" value="ALPHAHAEM"/>
</dbReference>
<dbReference type="PRINTS" id="PR00815">
    <property type="entry name" value="PIHAEM"/>
</dbReference>
<dbReference type="SUPFAM" id="SSF46458">
    <property type="entry name" value="Globin-like"/>
    <property type="match status" value="1"/>
</dbReference>
<dbReference type="PROSITE" id="PS01033">
    <property type="entry name" value="GLOBIN"/>
    <property type="match status" value="1"/>
</dbReference>
<sequence length="142" mass="15164">MVLSAADKSNVKAAWGKVGGNAGAYGAEALERMFLSFPTTKTYFPHFDLSHGSAQVKGHGEKVAAALTKAVGHLDDLPGTLSDLSDLHAHKLRVDPVNFKLLSHSLLVTLACHLPNDFTPAVHASLDKFLANVSTVLTSKYR</sequence>
<keyword id="KW-0007">Acetylation</keyword>
<keyword id="KW-0903">Direct protein sequencing</keyword>
<keyword id="KW-0349">Heme</keyword>
<keyword id="KW-0408">Iron</keyword>
<keyword id="KW-0479">Metal-binding</keyword>
<keyword id="KW-0561">Oxygen transport</keyword>
<keyword id="KW-0597">Phosphoprotein</keyword>
<keyword id="KW-0813">Transport</keyword>
<organism>
    <name type="scientific">Ammotragus lervia</name>
    <name type="common">Barbary sheep</name>
    <name type="synonym">Antilope lervia</name>
    <dbReference type="NCBI Taxonomy" id="9899"/>
    <lineage>
        <taxon>Eukaryota</taxon>
        <taxon>Metazoa</taxon>
        <taxon>Chordata</taxon>
        <taxon>Craniata</taxon>
        <taxon>Vertebrata</taxon>
        <taxon>Euteleostomi</taxon>
        <taxon>Mammalia</taxon>
        <taxon>Eutheria</taxon>
        <taxon>Laurasiatheria</taxon>
        <taxon>Artiodactyla</taxon>
        <taxon>Ruminantia</taxon>
        <taxon>Pecora</taxon>
        <taxon>Bovidae</taxon>
        <taxon>Caprinae</taxon>
        <taxon>Ammotragus</taxon>
    </lineage>
</organism>
<protein>
    <recommendedName>
        <fullName>Hemoglobin subunit alpha-1/2</fullName>
    </recommendedName>
    <alternativeName>
        <fullName>Alpha-1/2-globin</fullName>
    </alternativeName>
    <alternativeName>
        <fullName>Hemoglobin alpha-1/2 chain</fullName>
    </alternativeName>
</protein>
<comment type="function">
    <text evidence="1">Involved in oxygen transport from the lung to the various peripheral tissues.</text>
</comment>
<comment type="subunit">
    <text evidence="1">Heterotetramer of two alpha chains and two beta chains.</text>
</comment>
<comment type="miscellaneous">
    <text>Adult sheep and other mammalian species produce unequal amounts of alpha-globin from their non-allelic loci.</text>
</comment>
<comment type="miscellaneous">
    <text>Barbary sheep has two non-allelic alpha chains that appear to differ in three positions. Both chains differ from the sequence shown in having Glx instead of Asx at position 76, 83, or 86.</text>
</comment>
<comment type="miscellaneous">
    <text>The alpha-1 sequence is shown.</text>
</comment>
<comment type="similarity">
    <text evidence="4">Belongs to the globin family.</text>
</comment>
<evidence type="ECO:0000250" key="1"/>
<evidence type="ECO:0000250" key="2">
    <source>
        <dbReference type="UniProtKB" id="P01942"/>
    </source>
</evidence>
<evidence type="ECO:0000250" key="3">
    <source>
        <dbReference type="UniProtKB" id="P69905"/>
    </source>
</evidence>
<evidence type="ECO:0000255" key="4">
    <source>
        <dbReference type="PROSITE-ProRule" id="PRU00238"/>
    </source>
</evidence>
<evidence type="ECO:0000269" key="5">
    <source>
    </source>
</evidence>